<evidence type="ECO:0000255" key="1">
    <source>
        <dbReference type="HAMAP-Rule" id="MF_00822"/>
    </source>
</evidence>
<evidence type="ECO:0000256" key="2">
    <source>
        <dbReference type="SAM" id="MobiDB-lite"/>
    </source>
</evidence>
<accession>C3K4L5</accession>
<name>UREE_PSEFS</name>
<feature type="chain" id="PRO_1000213116" description="Urease accessory protein UreE">
    <location>
        <begin position="1"/>
        <end position="166"/>
    </location>
</feature>
<feature type="region of interest" description="Disordered" evidence="2">
    <location>
        <begin position="133"/>
        <end position="154"/>
    </location>
</feature>
<organism>
    <name type="scientific">Pseudomonas fluorescens (strain SBW25)</name>
    <dbReference type="NCBI Taxonomy" id="216595"/>
    <lineage>
        <taxon>Bacteria</taxon>
        <taxon>Pseudomonadati</taxon>
        <taxon>Pseudomonadota</taxon>
        <taxon>Gammaproteobacteria</taxon>
        <taxon>Pseudomonadales</taxon>
        <taxon>Pseudomonadaceae</taxon>
        <taxon>Pseudomonas</taxon>
    </lineage>
</organism>
<gene>
    <name evidence="1" type="primary">ureE</name>
    <name type="ordered locus">PFLU_0563</name>
</gene>
<keyword id="KW-0143">Chaperone</keyword>
<keyword id="KW-0963">Cytoplasm</keyword>
<keyword id="KW-0533">Nickel</keyword>
<proteinExistence type="inferred from homology"/>
<dbReference type="EMBL" id="AM181176">
    <property type="protein sequence ID" value="CAY46834.1"/>
    <property type="molecule type" value="Genomic_DNA"/>
</dbReference>
<dbReference type="RefSeq" id="WP_012721949.1">
    <property type="nucleotide sequence ID" value="NC_012660.1"/>
</dbReference>
<dbReference type="SMR" id="C3K4L5"/>
<dbReference type="STRING" id="294.SRM1_00628"/>
<dbReference type="GeneID" id="93462162"/>
<dbReference type="PATRIC" id="fig|216595.4.peg.800"/>
<dbReference type="eggNOG" id="COG2371">
    <property type="taxonomic scope" value="Bacteria"/>
</dbReference>
<dbReference type="HOGENOM" id="CLU_093757_2_0_6"/>
<dbReference type="OrthoDB" id="5421304at2"/>
<dbReference type="GO" id="GO:0005737">
    <property type="term" value="C:cytoplasm"/>
    <property type="evidence" value="ECO:0007669"/>
    <property type="project" value="UniProtKB-SubCell"/>
</dbReference>
<dbReference type="GO" id="GO:0016151">
    <property type="term" value="F:nickel cation binding"/>
    <property type="evidence" value="ECO:0007669"/>
    <property type="project" value="UniProtKB-UniRule"/>
</dbReference>
<dbReference type="GO" id="GO:0051082">
    <property type="term" value="F:unfolded protein binding"/>
    <property type="evidence" value="ECO:0007669"/>
    <property type="project" value="UniProtKB-UniRule"/>
</dbReference>
<dbReference type="GO" id="GO:0006457">
    <property type="term" value="P:protein folding"/>
    <property type="evidence" value="ECO:0007669"/>
    <property type="project" value="InterPro"/>
</dbReference>
<dbReference type="GO" id="GO:0065003">
    <property type="term" value="P:protein-containing complex assembly"/>
    <property type="evidence" value="ECO:0007669"/>
    <property type="project" value="InterPro"/>
</dbReference>
<dbReference type="GO" id="GO:0019627">
    <property type="term" value="P:urea metabolic process"/>
    <property type="evidence" value="ECO:0007669"/>
    <property type="project" value="InterPro"/>
</dbReference>
<dbReference type="CDD" id="cd00571">
    <property type="entry name" value="UreE"/>
    <property type="match status" value="1"/>
</dbReference>
<dbReference type="Gene3D" id="2.60.260.20">
    <property type="entry name" value="Urease metallochaperone UreE, N-terminal domain"/>
    <property type="match status" value="1"/>
</dbReference>
<dbReference type="Gene3D" id="3.30.70.790">
    <property type="entry name" value="UreE, C-terminal domain"/>
    <property type="match status" value="1"/>
</dbReference>
<dbReference type="HAMAP" id="MF_00822">
    <property type="entry name" value="UreE"/>
    <property type="match status" value="1"/>
</dbReference>
<dbReference type="InterPro" id="IPR012406">
    <property type="entry name" value="UreE"/>
</dbReference>
<dbReference type="InterPro" id="IPR007864">
    <property type="entry name" value="UreE_C_dom"/>
</dbReference>
<dbReference type="InterPro" id="IPR004029">
    <property type="entry name" value="UreE_N"/>
</dbReference>
<dbReference type="InterPro" id="IPR036118">
    <property type="entry name" value="UreE_N_sf"/>
</dbReference>
<dbReference type="NCBIfam" id="NF009751">
    <property type="entry name" value="PRK13261.1-1"/>
    <property type="match status" value="1"/>
</dbReference>
<dbReference type="NCBIfam" id="NF009753">
    <property type="entry name" value="PRK13261.1-5"/>
    <property type="match status" value="1"/>
</dbReference>
<dbReference type="Pfam" id="PF05194">
    <property type="entry name" value="UreE_C"/>
    <property type="match status" value="1"/>
</dbReference>
<dbReference type="Pfam" id="PF02814">
    <property type="entry name" value="UreE_N"/>
    <property type="match status" value="1"/>
</dbReference>
<dbReference type="PIRSF" id="PIRSF036402">
    <property type="entry name" value="Ureas_acces_UreE"/>
    <property type="match status" value="1"/>
</dbReference>
<dbReference type="SMART" id="SM00988">
    <property type="entry name" value="UreE_N"/>
    <property type="match status" value="1"/>
</dbReference>
<dbReference type="SUPFAM" id="SSF69737">
    <property type="entry name" value="Urease metallochaperone UreE, C-terminal domain"/>
    <property type="match status" value="1"/>
</dbReference>
<dbReference type="SUPFAM" id="SSF69287">
    <property type="entry name" value="Urease metallochaperone UreE, N-terminal domain"/>
    <property type="match status" value="1"/>
</dbReference>
<protein>
    <recommendedName>
        <fullName evidence="1">Urease accessory protein UreE</fullName>
    </recommendedName>
</protein>
<comment type="function">
    <text evidence="1">Involved in urease metallocenter assembly. Binds nickel. Probably functions as a nickel donor during metallocenter assembly.</text>
</comment>
<comment type="subcellular location">
    <subcellularLocation>
        <location evidence="1">Cytoplasm</location>
    </subcellularLocation>
</comment>
<comment type="similarity">
    <text evidence="1">Belongs to the UreE family.</text>
</comment>
<sequence>MLVIHRRIAPQALWAAELLLNFEARSKSRLRCFSADGEDVGLFLERGQPPLHDGEFLQAEDGRVVRVCARPEQLLHVTCSNAFELTRAAYHLGNRHVALQVGDGWLRLLDDYVLKAMLEQLGAQTETIEAPFQPEHGAYGGGHHHSRHGDEDFNYPPKLHQFGVRL</sequence>
<reference key="1">
    <citation type="journal article" date="2009" name="Genome Biol.">
        <title>Genomic and genetic analyses of diversity and plant interactions of Pseudomonas fluorescens.</title>
        <authorList>
            <person name="Silby M.W."/>
            <person name="Cerdeno-Tarraga A.M."/>
            <person name="Vernikos G.S."/>
            <person name="Giddens S.R."/>
            <person name="Jackson R.W."/>
            <person name="Preston G.M."/>
            <person name="Zhang X.-X."/>
            <person name="Moon C.D."/>
            <person name="Gehrig S.M."/>
            <person name="Godfrey S.A.C."/>
            <person name="Knight C.G."/>
            <person name="Malone J.G."/>
            <person name="Robinson Z."/>
            <person name="Spiers A.J."/>
            <person name="Harris S."/>
            <person name="Challis G.L."/>
            <person name="Yaxley A.M."/>
            <person name="Harris D."/>
            <person name="Seeger K."/>
            <person name="Murphy L."/>
            <person name="Rutter S."/>
            <person name="Squares R."/>
            <person name="Quail M.A."/>
            <person name="Saunders E."/>
            <person name="Mavromatis K."/>
            <person name="Brettin T.S."/>
            <person name="Bentley S.D."/>
            <person name="Hothersall J."/>
            <person name="Stephens E."/>
            <person name="Thomas C.M."/>
            <person name="Parkhill J."/>
            <person name="Levy S.B."/>
            <person name="Rainey P.B."/>
            <person name="Thomson N.R."/>
        </authorList>
    </citation>
    <scope>NUCLEOTIDE SEQUENCE [LARGE SCALE GENOMIC DNA]</scope>
    <source>
        <strain>SBW25</strain>
    </source>
</reference>